<keyword id="KW-0025">Alternative splicing</keyword>
<keyword id="KW-1185">Reference proteome</keyword>
<comment type="alternative products">
    <event type="alternative splicing"/>
    <isoform>
        <id>Q14BJ1-1</id>
        <name>1</name>
        <sequence type="displayed"/>
    </isoform>
    <isoform>
        <id>Q14BJ1-2</id>
        <name>2</name>
        <sequence type="described" ref="VSP_036132"/>
    </isoform>
</comment>
<comment type="similarity">
    <text evidence="3">Belongs to the FAM89 family.</text>
</comment>
<protein>
    <recommendedName>
        <fullName>Protein FAM89A</fullName>
    </recommendedName>
</protein>
<feature type="chain" id="PRO_0000358921" description="Protein FAM89A">
    <location>
        <begin position="1"/>
        <end position="175"/>
    </location>
</feature>
<feature type="region of interest" description="Disordered" evidence="1">
    <location>
        <begin position="141"/>
        <end position="175"/>
    </location>
</feature>
<feature type="compositionally biased region" description="Polar residues" evidence="1">
    <location>
        <begin position="157"/>
        <end position="169"/>
    </location>
</feature>
<feature type="splice variant" id="VSP_036132" description="In isoform 2." evidence="2">
    <location>
        <begin position="1"/>
        <end position="71"/>
    </location>
</feature>
<gene>
    <name type="primary">Fam89a</name>
</gene>
<accession>Q14BJ1</accession>
<accession>Q8R3X3</accession>
<reference key="1">
    <citation type="journal article" date="2009" name="PLoS Biol.">
        <title>Lineage-specific biology revealed by a finished genome assembly of the mouse.</title>
        <authorList>
            <person name="Church D.M."/>
            <person name="Goodstadt L."/>
            <person name="Hillier L.W."/>
            <person name="Zody M.C."/>
            <person name="Goldstein S."/>
            <person name="She X."/>
            <person name="Bult C.J."/>
            <person name="Agarwala R."/>
            <person name="Cherry J.L."/>
            <person name="DiCuccio M."/>
            <person name="Hlavina W."/>
            <person name="Kapustin Y."/>
            <person name="Meric P."/>
            <person name="Maglott D."/>
            <person name="Birtle Z."/>
            <person name="Marques A.C."/>
            <person name="Graves T."/>
            <person name="Zhou S."/>
            <person name="Teague B."/>
            <person name="Potamousis K."/>
            <person name="Churas C."/>
            <person name="Place M."/>
            <person name="Herschleb J."/>
            <person name="Runnheim R."/>
            <person name="Forrest D."/>
            <person name="Amos-Landgraf J."/>
            <person name="Schwartz D.C."/>
            <person name="Cheng Z."/>
            <person name="Lindblad-Toh K."/>
            <person name="Eichler E.E."/>
            <person name="Ponting C.P."/>
        </authorList>
    </citation>
    <scope>NUCLEOTIDE SEQUENCE [LARGE SCALE GENOMIC DNA]</scope>
    <source>
        <strain>C57BL/6J</strain>
    </source>
</reference>
<reference key="2">
    <citation type="journal article" date="2004" name="Genome Res.">
        <title>The status, quality, and expansion of the NIH full-length cDNA project: the Mammalian Gene Collection (MGC).</title>
        <authorList>
            <consortium name="The MGC Project Team"/>
        </authorList>
    </citation>
    <scope>NUCLEOTIDE SEQUENCE [LARGE SCALE MRNA] (ISOFORM 2)</scope>
    <scope>NUCLEOTIDE SEQUENCE [LARGE SCALE MRNA] OF 54-175 (ISOFORM 1)</scope>
    <source>
        <strain>FVB/N-3</strain>
        <tissue>Mammary tumor</tissue>
    </source>
</reference>
<dbReference type="EMBL" id="AC151736">
    <property type="status" value="NOT_ANNOTATED_CDS"/>
    <property type="molecule type" value="Genomic_DNA"/>
</dbReference>
<dbReference type="EMBL" id="BC023460">
    <property type="protein sequence ID" value="AAH23460.1"/>
    <property type="molecule type" value="mRNA"/>
</dbReference>
<dbReference type="EMBL" id="BC115734">
    <property type="protein sequence ID" value="AAI15735.1"/>
    <property type="molecule type" value="mRNA"/>
</dbReference>
<dbReference type="EMBL" id="BC115819">
    <property type="protein sequence ID" value="AAI15820.1"/>
    <property type="molecule type" value="mRNA"/>
</dbReference>
<dbReference type="CCDS" id="CCDS40516.1">
    <molecule id="Q14BJ1-1"/>
</dbReference>
<dbReference type="RefSeq" id="NP_001074589.1">
    <molecule id="Q14BJ1-1"/>
    <property type="nucleotide sequence ID" value="NM_001081120.2"/>
</dbReference>
<dbReference type="SMR" id="Q14BJ1"/>
<dbReference type="FunCoup" id="Q14BJ1">
    <property type="interactions" value="2"/>
</dbReference>
<dbReference type="STRING" id="10090.ENSMUSP00000058156"/>
<dbReference type="PhosphoSitePlus" id="Q14BJ1"/>
<dbReference type="PaxDb" id="10090-ENSMUSP00000058156"/>
<dbReference type="ProteomicsDB" id="271542">
    <molecule id="Q14BJ1-1"/>
</dbReference>
<dbReference type="Antibodypedia" id="68454">
    <property type="antibodies" value="9 antibodies from 5 providers"/>
</dbReference>
<dbReference type="Ensembl" id="ENSMUST00000055257.7">
    <molecule id="Q14BJ1-1"/>
    <property type="protein sequence ID" value="ENSMUSP00000058156.6"/>
    <property type="gene ID" value="ENSMUSG00000043068.7"/>
</dbReference>
<dbReference type="GeneID" id="69627"/>
<dbReference type="KEGG" id="mmu:69627"/>
<dbReference type="UCSC" id="uc009nxp.1">
    <molecule id="Q14BJ1-1"/>
    <property type="organism name" value="mouse"/>
</dbReference>
<dbReference type="AGR" id="MGI:1916877"/>
<dbReference type="CTD" id="375061"/>
<dbReference type="MGI" id="MGI:1916877">
    <property type="gene designation" value="Fam89a"/>
</dbReference>
<dbReference type="VEuPathDB" id="HostDB:ENSMUSG00000043068"/>
<dbReference type="eggNOG" id="ENOG502S28T">
    <property type="taxonomic scope" value="Eukaryota"/>
</dbReference>
<dbReference type="GeneTree" id="ENSGT00940000153370"/>
<dbReference type="HOGENOM" id="CLU_128818_1_0_1"/>
<dbReference type="InParanoid" id="Q14BJ1"/>
<dbReference type="OMA" id="MMENGFF"/>
<dbReference type="OrthoDB" id="1681166at2759"/>
<dbReference type="PhylomeDB" id="Q14BJ1"/>
<dbReference type="BioGRID-ORCS" id="69627">
    <property type="hits" value="1 hit in 79 CRISPR screens"/>
</dbReference>
<dbReference type="ChiTaRS" id="Fam89a">
    <property type="organism name" value="mouse"/>
</dbReference>
<dbReference type="PRO" id="PR:Q14BJ1"/>
<dbReference type="Proteomes" id="UP000000589">
    <property type="component" value="Chromosome 8"/>
</dbReference>
<dbReference type="RNAct" id="Q14BJ1">
    <property type="molecule type" value="protein"/>
</dbReference>
<dbReference type="Bgee" id="ENSMUSG00000043068">
    <property type="expression patterns" value="Expressed in lumbar dorsal root ganglion and 97 other cell types or tissues"/>
</dbReference>
<dbReference type="PANTHER" id="PTHR46949">
    <property type="entry name" value="LEUCINE REPEAT ADAPTER PROTEIN 25"/>
    <property type="match status" value="1"/>
</dbReference>
<dbReference type="PANTHER" id="PTHR46949:SF3">
    <property type="entry name" value="PROTEIN FAM89A"/>
    <property type="match status" value="1"/>
</dbReference>
<evidence type="ECO:0000256" key="1">
    <source>
        <dbReference type="SAM" id="MobiDB-lite"/>
    </source>
</evidence>
<evidence type="ECO:0000303" key="2">
    <source>
    </source>
</evidence>
<evidence type="ECO:0000305" key="3"/>
<organism>
    <name type="scientific">Mus musculus</name>
    <name type="common">Mouse</name>
    <dbReference type="NCBI Taxonomy" id="10090"/>
    <lineage>
        <taxon>Eukaryota</taxon>
        <taxon>Metazoa</taxon>
        <taxon>Chordata</taxon>
        <taxon>Craniata</taxon>
        <taxon>Vertebrata</taxon>
        <taxon>Euteleostomi</taxon>
        <taxon>Mammalia</taxon>
        <taxon>Eutheria</taxon>
        <taxon>Euarchontoglires</taxon>
        <taxon>Glires</taxon>
        <taxon>Rodentia</taxon>
        <taxon>Myomorpha</taxon>
        <taxon>Muroidea</taxon>
        <taxon>Muridae</taxon>
        <taxon>Murinae</taxon>
        <taxon>Mus</taxon>
        <taxon>Mus</taxon>
    </lineage>
</organism>
<name>FA89A_MOUSE</name>
<proteinExistence type="evidence at transcript level"/>
<sequence>MSGTGSAGMARGLRVDGLPPLPKSLSGLLHSAAGGAAGGWRHLERLYAQKSRIQDELNRGGAGGGGARAAGMRTKPPNLDAALALLRKEMVGLRQLDMSLLCQLYSLYESIQEYKGACQAASSLDCTYALENGFFDDEEDFQEQGSLQDGQHHGSPRDQSPLTHLSSSDWILESI</sequence>